<reference key="1">
    <citation type="journal article" date="2000" name="Nature">
        <title>The genome sequence of the plant pathogen Xylella fastidiosa.</title>
        <authorList>
            <person name="Simpson A.J.G."/>
            <person name="Reinach F.C."/>
            <person name="Arruda P."/>
            <person name="Abreu F.A."/>
            <person name="Acencio M."/>
            <person name="Alvarenga R."/>
            <person name="Alves L.M.C."/>
            <person name="Araya J.E."/>
            <person name="Baia G.S."/>
            <person name="Baptista C.S."/>
            <person name="Barros M.H."/>
            <person name="Bonaccorsi E.D."/>
            <person name="Bordin S."/>
            <person name="Bove J.M."/>
            <person name="Briones M.R.S."/>
            <person name="Bueno M.R.P."/>
            <person name="Camargo A.A."/>
            <person name="Camargo L.E.A."/>
            <person name="Carraro D.M."/>
            <person name="Carrer H."/>
            <person name="Colauto N.B."/>
            <person name="Colombo C."/>
            <person name="Costa F.F."/>
            <person name="Costa M.C.R."/>
            <person name="Costa-Neto C.M."/>
            <person name="Coutinho L.L."/>
            <person name="Cristofani M."/>
            <person name="Dias-Neto E."/>
            <person name="Docena C."/>
            <person name="El-Dorry H."/>
            <person name="Facincani A.P."/>
            <person name="Ferreira A.J.S."/>
            <person name="Ferreira V.C.A."/>
            <person name="Ferro J.A."/>
            <person name="Fraga J.S."/>
            <person name="Franca S.C."/>
            <person name="Franco M.C."/>
            <person name="Frohme M."/>
            <person name="Furlan L.R."/>
            <person name="Garnier M."/>
            <person name="Goldman G.H."/>
            <person name="Goldman M.H.S."/>
            <person name="Gomes S.L."/>
            <person name="Gruber A."/>
            <person name="Ho P.L."/>
            <person name="Hoheisel J.D."/>
            <person name="Junqueira M.L."/>
            <person name="Kemper E.L."/>
            <person name="Kitajima J.P."/>
            <person name="Krieger J.E."/>
            <person name="Kuramae E.E."/>
            <person name="Laigret F."/>
            <person name="Lambais M.R."/>
            <person name="Leite L.C.C."/>
            <person name="Lemos E.G.M."/>
            <person name="Lemos M.V.F."/>
            <person name="Lopes S.A."/>
            <person name="Lopes C.R."/>
            <person name="Machado J.A."/>
            <person name="Machado M.A."/>
            <person name="Madeira A.M.B.N."/>
            <person name="Madeira H.M.F."/>
            <person name="Marino C.L."/>
            <person name="Marques M.V."/>
            <person name="Martins E.A.L."/>
            <person name="Martins E.M.F."/>
            <person name="Matsukuma A.Y."/>
            <person name="Menck C.F.M."/>
            <person name="Miracca E.C."/>
            <person name="Miyaki C.Y."/>
            <person name="Monteiro-Vitorello C.B."/>
            <person name="Moon D.H."/>
            <person name="Nagai M.A."/>
            <person name="Nascimento A.L.T.O."/>
            <person name="Netto L.E.S."/>
            <person name="Nhani A. Jr."/>
            <person name="Nobrega F.G."/>
            <person name="Nunes L.R."/>
            <person name="Oliveira M.A."/>
            <person name="de Oliveira M.C."/>
            <person name="de Oliveira R.C."/>
            <person name="Palmieri D.A."/>
            <person name="Paris A."/>
            <person name="Peixoto B.R."/>
            <person name="Pereira G.A.G."/>
            <person name="Pereira H.A. Jr."/>
            <person name="Pesquero J.B."/>
            <person name="Quaggio R.B."/>
            <person name="Roberto P.G."/>
            <person name="Rodrigues V."/>
            <person name="de Rosa A.J.M."/>
            <person name="de Rosa V.E. Jr."/>
            <person name="de Sa R.G."/>
            <person name="Santelli R.V."/>
            <person name="Sawasaki H.E."/>
            <person name="da Silva A.C.R."/>
            <person name="da Silva A.M."/>
            <person name="da Silva F.R."/>
            <person name="Silva W.A. Jr."/>
            <person name="da Silveira J.F."/>
            <person name="Silvestri M.L.Z."/>
            <person name="Siqueira W.J."/>
            <person name="de Souza A.A."/>
            <person name="de Souza A.P."/>
            <person name="Terenzi M.F."/>
            <person name="Truffi D."/>
            <person name="Tsai S.M."/>
            <person name="Tsuhako M.H."/>
            <person name="Vallada H."/>
            <person name="Van Sluys M.A."/>
            <person name="Verjovski-Almeida S."/>
            <person name="Vettore A.L."/>
            <person name="Zago M.A."/>
            <person name="Zatz M."/>
            <person name="Meidanis J."/>
            <person name="Setubal J.C."/>
        </authorList>
    </citation>
    <scope>NUCLEOTIDE SEQUENCE [LARGE SCALE GENOMIC DNA]</scope>
    <source>
        <strain>9a5c</strain>
    </source>
</reference>
<protein>
    <recommendedName>
        <fullName evidence="1">Nucleotide-binding protein XF_1405</fullName>
    </recommendedName>
</protein>
<accession>Q9PDH4</accession>
<proteinExistence type="inferred from homology"/>
<feature type="chain" id="PRO_0000107792" description="Nucleotide-binding protein XF_1405">
    <location>
        <begin position="1"/>
        <end position="290"/>
    </location>
</feature>
<feature type="binding site" evidence="1">
    <location>
        <begin position="13"/>
        <end position="20"/>
    </location>
    <ligand>
        <name>ATP</name>
        <dbReference type="ChEBI" id="CHEBI:30616"/>
    </ligand>
</feature>
<feature type="binding site" evidence="1">
    <location>
        <begin position="65"/>
        <end position="68"/>
    </location>
    <ligand>
        <name>GTP</name>
        <dbReference type="ChEBI" id="CHEBI:37565"/>
    </ligand>
</feature>
<evidence type="ECO:0000255" key="1">
    <source>
        <dbReference type="HAMAP-Rule" id="MF_00636"/>
    </source>
</evidence>
<dbReference type="EMBL" id="AE003849">
    <property type="protein sequence ID" value="AAF84214.1"/>
    <property type="molecule type" value="Genomic_DNA"/>
</dbReference>
<dbReference type="PIR" id="A82687">
    <property type="entry name" value="A82687"/>
</dbReference>
<dbReference type="SMR" id="Q9PDH4"/>
<dbReference type="STRING" id="160492.XF_1405"/>
<dbReference type="KEGG" id="xfa:XF_1405"/>
<dbReference type="eggNOG" id="COG1660">
    <property type="taxonomic scope" value="Bacteria"/>
</dbReference>
<dbReference type="HOGENOM" id="CLU_059558_1_1_6"/>
<dbReference type="Proteomes" id="UP000000812">
    <property type="component" value="Chromosome"/>
</dbReference>
<dbReference type="GO" id="GO:0005524">
    <property type="term" value="F:ATP binding"/>
    <property type="evidence" value="ECO:0007669"/>
    <property type="project" value="UniProtKB-UniRule"/>
</dbReference>
<dbReference type="GO" id="GO:0005525">
    <property type="term" value="F:GTP binding"/>
    <property type="evidence" value="ECO:0007669"/>
    <property type="project" value="UniProtKB-UniRule"/>
</dbReference>
<dbReference type="Gene3D" id="3.40.50.300">
    <property type="entry name" value="P-loop containing nucleotide triphosphate hydrolases"/>
    <property type="match status" value="1"/>
</dbReference>
<dbReference type="HAMAP" id="MF_00636">
    <property type="entry name" value="RapZ_like"/>
    <property type="match status" value="1"/>
</dbReference>
<dbReference type="InterPro" id="IPR027417">
    <property type="entry name" value="P-loop_NTPase"/>
</dbReference>
<dbReference type="InterPro" id="IPR005337">
    <property type="entry name" value="RapZ-like"/>
</dbReference>
<dbReference type="InterPro" id="IPR053930">
    <property type="entry name" value="RapZ-like_N"/>
</dbReference>
<dbReference type="InterPro" id="IPR053931">
    <property type="entry name" value="RapZ_C"/>
</dbReference>
<dbReference type="NCBIfam" id="NF003828">
    <property type="entry name" value="PRK05416.1"/>
    <property type="match status" value="1"/>
</dbReference>
<dbReference type="PANTHER" id="PTHR30448">
    <property type="entry name" value="RNASE ADAPTER PROTEIN RAPZ"/>
    <property type="match status" value="1"/>
</dbReference>
<dbReference type="PANTHER" id="PTHR30448:SF0">
    <property type="entry name" value="RNASE ADAPTER PROTEIN RAPZ"/>
    <property type="match status" value="1"/>
</dbReference>
<dbReference type="Pfam" id="PF22740">
    <property type="entry name" value="PapZ_C"/>
    <property type="match status" value="1"/>
</dbReference>
<dbReference type="Pfam" id="PF03668">
    <property type="entry name" value="RapZ-like_N"/>
    <property type="match status" value="1"/>
</dbReference>
<dbReference type="PIRSF" id="PIRSF005052">
    <property type="entry name" value="P-loopkin"/>
    <property type="match status" value="1"/>
</dbReference>
<dbReference type="SUPFAM" id="SSF52540">
    <property type="entry name" value="P-loop containing nucleoside triphosphate hydrolases"/>
    <property type="match status" value="1"/>
</dbReference>
<keyword id="KW-0067">ATP-binding</keyword>
<keyword id="KW-0342">GTP-binding</keyword>
<keyword id="KW-0547">Nucleotide-binding</keyword>
<name>Y1405_XYLFA</name>
<comment type="function">
    <text evidence="1">Displays ATPase and GTPase activities.</text>
</comment>
<comment type="similarity">
    <text evidence="1">Belongs to the RapZ-like family.</text>
</comment>
<gene>
    <name type="ordered locus">XF_1405</name>
</gene>
<organism>
    <name type="scientific">Xylella fastidiosa (strain 9a5c)</name>
    <dbReference type="NCBI Taxonomy" id="160492"/>
    <lineage>
        <taxon>Bacteria</taxon>
        <taxon>Pseudomonadati</taxon>
        <taxon>Pseudomonadota</taxon>
        <taxon>Gammaproteobacteria</taxon>
        <taxon>Lysobacterales</taxon>
        <taxon>Lysobacteraceae</taxon>
        <taxon>Xylella</taxon>
    </lineage>
</organism>
<sequence length="290" mass="33323">MKPPEHSLIIISGLSGSGKSVALKTFEDLDYYCSDNLPVELLPHFLRCRLRVAELSDQRIAIGIDIRSGSNLSELDQWRHTAKHYNIKAHLLFFEASNETLLKRYADTRRRHPLSHLGLSLPEAIALERELTAPLREAAEAVIDTSTFNVHQLRRHVVTEFALTHSDKLSLLFESFAYKRGVPTEADFVFDARILPNPHWEPELRSLTGRDSNVRDYMEQQPDVILYLRQITEFLDTWLARLQADTRSYVTVAFGCTGGKHRSVYLAEQMARHAREKGWSEVATFHRELE</sequence>